<keyword id="KW-0002">3D-structure</keyword>
<keyword id="KW-1185">Reference proteome</keyword>
<keyword id="KW-0687">Ribonucleoprotein</keyword>
<keyword id="KW-0689">Ribosomal protein</keyword>
<evidence type="ECO:0000255" key="1">
    <source>
        <dbReference type="HAMAP-Rule" id="MF_01366"/>
    </source>
</evidence>
<evidence type="ECO:0000256" key="2">
    <source>
        <dbReference type="SAM" id="MobiDB-lite"/>
    </source>
</evidence>
<evidence type="ECO:0000305" key="3"/>
<proteinExistence type="evidence at protein level"/>
<reference key="1">
    <citation type="journal article" date="1998" name="Nature">
        <title>Deciphering the biology of Mycobacterium tuberculosis from the complete genome sequence.</title>
        <authorList>
            <person name="Cole S.T."/>
            <person name="Brosch R."/>
            <person name="Parkhill J."/>
            <person name="Garnier T."/>
            <person name="Churcher C.M."/>
            <person name="Harris D.E."/>
            <person name="Gordon S.V."/>
            <person name="Eiglmeier K."/>
            <person name="Gas S."/>
            <person name="Barry C.E. III"/>
            <person name="Tekaia F."/>
            <person name="Badcock K."/>
            <person name="Basham D."/>
            <person name="Brown D."/>
            <person name="Chillingworth T."/>
            <person name="Connor R."/>
            <person name="Davies R.M."/>
            <person name="Devlin K."/>
            <person name="Feltwell T."/>
            <person name="Gentles S."/>
            <person name="Hamlin N."/>
            <person name="Holroyd S."/>
            <person name="Hornsby T."/>
            <person name="Jagels K."/>
            <person name="Krogh A."/>
            <person name="McLean J."/>
            <person name="Moule S."/>
            <person name="Murphy L.D."/>
            <person name="Oliver S."/>
            <person name="Osborne J."/>
            <person name="Quail M.A."/>
            <person name="Rajandream M.A."/>
            <person name="Rogers J."/>
            <person name="Rutter S."/>
            <person name="Seeger K."/>
            <person name="Skelton S."/>
            <person name="Squares S."/>
            <person name="Squares R."/>
            <person name="Sulston J.E."/>
            <person name="Taylor K."/>
            <person name="Whitehead S."/>
            <person name="Barrell B.G."/>
        </authorList>
    </citation>
    <scope>NUCLEOTIDE SEQUENCE [LARGE SCALE GENOMIC DNA]</scope>
    <source>
        <strain>ATCC 25618 / H37Rv</strain>
    </source>
</reference>
<reference key="2">
    <citation type="journal article" date="2011" name="Mol. Cell. Proteomics">
        <title>Proteogenomic analysis of Mycobacterium tuberculosis by high resolution mass spectrometry.</title>
        <authorList>
            <person name="Kelkar D.S."/>
            <person name="Kumar D."/>
            <person name="Kumar P."/>
            <person name="Balakrishnan L."/>
            <person name="Muthusamy B."/>
            <person name="Yadav A.K."/>
            <person name="Shrivastava P."/>
            <person name="Marimuthu A."/>
            <person name="Anand S."/>
            <person name="Sundaram H."/>
            <person name="Kingsbury R."/>
            <person name="Harsha H.C."/>
            <person name="Nair B."/>
            <person name="Prasad T.S."/>
            <person name="Chauhan D.S."/>
            <person name="Katoch K."/>
            <person name="Katoch V.M."/>
            <person name="Kumar P."/>
            <person name="Chaerkady R."/>
            <person name="Ramachandran S."/>
            <person name="Dash D."/>
            <person name="Pandey A."/>
        </authorList>
    </citation>
    <scope>IDENTIFICATION BY MASS SPECTROMETRY [LARGE SCALE ANALYSIS]</scope>
    <source>
        <strain>ATCC 25618 / H37Rv</strain>
    </source>
</reference>
<comment type="function">
    <text evidence="1">This protein is one of the early assembly proteins of the 50S ribosomal subunit, although it is not seen to bind rRNA by itself. It is important during the early stages of 50S assembly.</text>
</comment>
<comment type="subunit">
    <text evidence="1">Part of the 50S ribosomal subunit.</text>
</comment>
<comment type="similarity">
    <text evidence="1">Belongs to the universal ribosomal protein uL13 family.</text>
</comment>
<accession>P9WHE1</accession>
<accession>L0TFM7</accession>
<accession>O06260</accession>
<accession>P66065</accession>
<sequence>MPTYAPKAGDTTRSWYVIDATDVVLGRLAVAAANLLRGKHKPTFAPNVDGGDFVIVINADKVAISGDKLQHKMVYRHSGYPGGLHKRTIGELMQRHPDRVVEKAILGMLPKNRLSRQIQRKLRVYAGPEHPHSAQQPVPYELKQVAQ</sequence>
<dbReference type="EMBL" id="AL123456">
    <property type="protein sequence ID" value="CCP46265.1"/>
    <property type="molecule type" value="Genomic_DNA"/>
</dbReference>
<dbReference type="PIR" id="A70977">
    <property type="entry name" value="A70977"/>
</dbReference>
<dbReference type="RefSeq" id="NP_217960.1">
    <property type="nucleotide sequence ID" value="NC_000962.3"/>
</dbReference>
<dbReference type="RefSeq" id="WP_003418312.1">
    <property type="nucleotide sequence ID" value="NZ_NVQJ01000065.1"/>
</dbReference>
<dbReference type="PDB" id="5V7Q">
    <property type="method" value="EM"/>
    <property type="resolution" value="3.70 A"/>
    <property type="chains" value="J=1-147"/>
</dbReference>
<dbReference type="PDB" id="5V93">
    <property type="method" value="EM"/>
    <property type="resolution" value="4.00 A"/>
    <property type="chains" value="J=1-147"/>
</dbReference>
<dbReference type="PDBsum" id="5V7Q"/>
<dbReference type="PDBsum" id="5V93"/>
<dbReference type="EMDB" id="EMD-8645"/>
<dbReference type="SMR" id="P9WHE1"/>
<dbReference type="FunCoup" id="P9WHE1">
    <property type="interactions" value="477"/>
</dbReference>
<dbReference type="STRING" id="83332.Rv3443c"/>
<dbReference type="PaxDb" id="83332-Rv3443c"/>
<dbReference type="DNASU" id="887584"/>
<dbReference type="GeneID" id="45427433"/>
<dbReference type="GeneID" id="887584"/>
<dbReference type="KEGG" id="mtu:Rv3443c"/>
<dbReference type="KEGG" id="mtv:RVBD_3443c"/>
<dbReference type="TubercuList" id="Rv3443c"/>
<dbReference type="eggNOG" id="COG0102">
    <property type="taxonomic scope" value="Bacteria"/>
</dbReference>
<dbReference type="InParanoid" id="P9WHE1"/>
<dbReference type="OrthoDB" id="9801330at2"/>
<dbReference type="PhylomeDB" id="P9WHE1"/>
<dbReference type="PRO" id="PR:P9WHE1"/>
<dbReference type="Proteomes" id="UP000001584">
    <property type="component" value="Chromosome"/>
</dbReference>
<dbReference type="GO" id="GO:0005829">
    <property type="term" value="C:cytosol"/>
    <property type="evidence" value="ECO:0007005"/>
    <property type="project" value="MTBBASE"/>
</dbReference>
<dbReference type="GO" id="GO:0022625">
    <property type="term" value="C:cytosolic large ribosomal subunit"/>
    <property type="evidence" value="ECO:0000318"/>
    <property type="project" value="GO_Central"/>
</dbReference>
<dbReference type="GO" id="GO:0009274">
    <property type="term" value="C:peptidoglycan-based cell wall"/>
    <property type="evidence" value="ECO:0007005"/>
    <property type="project" value="MTBBASE"/>
</dbReference>
<dbReference type="GO" id="GO:0005886">
    <property type="term" value="C:plasma membrane"/>
    <property type="evidence" value="ECO:0007005"/>
    <property type="project" value="MTBBASE"/>
</dbReference>
<dbReference type="GO" id="GO:0005840">
    <property type="term" value="C:ribosome"/>
    <property type="evidence" value="ECO:0000318"/>
    <property type="project" value="GO_Central"/>
</dbReference>
<dbReference type="GO" id="GO:0003729">
    <property type="term" value="F:mRNA binding"/>
    <property type="evidence" value="ECO:0000318"/>
    <property type="project" value="GO_Central"/>
</dbReference>
<dbReference type="GO" id="GO:0003735">
    <property type="term" value="F:structural constituent of ribosome"/>
    <property type="evidence" value="ECO:0000318"/>
    <property type="project" value="GO_Central"/>
</dbReference>
<dbReference type="GO" id="GO:0017148">
    <property type="term" value="P:negative regulation of translation"/>
    <property type="evidence" value="ECO:0000318"/>
    <property type="project" value="GO_Central"/>
</dbReference>
<dbReference type="GO" id="GO:0006412">
    <property type="term" value="P:translation"/>
    <property type="evidence" value="ECO:0007669"/>
    <property type="project" value="UniProtKB-UniRule"/>
</dbReference>
<dbReference type="CDD" id="cd00392">
    <property type="entry name" value="Ribosomal_L13"/>
    <property type="match status" value="1"/>
</dbReference>
<dbReference type="FunFam" id="3.90.1180.10:FF:000001">
    <property type="entry name" value="50S ribosomal protein L13"/>
    <property type="match status" value="1"/>
</dbReference>
<dbReference type="Gene3D" id="3.90.1180.10">
    <property type="entry name" value="Ribosomal protein L13"/>
    <property type="match status" value="1"/>
</dbReference>
<dbReference type="HAMAP" id="MF_01366">
    <property type="entry name" value="Ribosomal_uL13"/>
    <property type="match status" value="1"/>
</dbReference>
<dbReference type="InterPro" id="IPR005822">
    <property type="entry name" value="Ribosomal_uL13"/>
</dbReference>
<dbReference type="InterPro" id="IPR005823">
    <property type="entry name" value="Ribosomal_uL13_bac-type"/>
</dbReference>
<dbReference type="InterPro" id="IPR023563">
    <property type="entry name" value="Ribosomal_uL13_CS"/>
</dbReference>
<dbReference type="InterPro" id="IPR036899">
    <property type="entry name" value="Ribosomal_uL13_sf"/>
</dbReference>
<dbReference type="NCBIfam" id="TIGR01066">
    <property type="entry name" value="rplM_bact"/>
    <property type="match status" value="1"/>
</dbReference>
<dbReference type="PANTHER" id="PTHR11545:SF2">
    <property type="entry name" value="LARGE RIBOSOMAL SUBUNIT PROTEIN UL13M"/>
    <property type="match status" value="1"/>
</dbReference>
<dbReference type="PANTHER" id="PTHR11545">
    <property type="entry name" value="RIBOSOMAL PROTEIN L13"/>
    <property type="match status" value="1"/>
</dbReference>
<dbReference type="Pfam" id="PF00572">
    <property type="entry name" value="Ribosomal_L13"/>
    <property type="match status" value="1"/>
</dbReference>
<dbReference type="PIRSF" id="PIRSF002181">
    <property type="entry name" value="Ribosomal_L13"/>
    <property type="match status" value="1"/>
</dbReference>
<dbReference type="SUPFAM" id="SSF52161">
    <property type="entry name" value="Ribosomal protein L13"/>
    <property type="match status" value="1"/>
</dbReference>
<dbReference type="PROSITE" id="PS00783">
    <property type="entry name" value="RIBOSOMAL_L13"/>
    <property type="match status" value="1"/>
</dbReference>
<organism>
    <name type="scientific">Mycobacterium tuberculosis (strain ATCC 25618 / H37Rv)</name>
    <dbReference type="NCBI Taxonomy" id="83332"/>
    <lineage>
        <taxon>Bacteria</taxon>
        <taxon>Bacillati</taxon>
        <taxon>Actinomycetota</taxon>
        <taxon>Actinomycetes</taxon>
        <taxon>Mycobacteriales</taxon>
        <taxon>Mycobacteriaceae</taxon>
        <taxon>Mycobacterium</taxon>
        <taxon>Mycobacterium tuberculosis complex</taxon>
    </lineage>
</organism>
<feature type="chain" id="PRO_0000133744" description="Large ribosomal subunit protein uL13">
    <location>
        <begin position="1"/>
        <end position="147"/>
    </location>
</feature>
<feature type="region of interest" description="Disordered" evidence="2">
    <location>
        <begin position="128"/>
        <end position="147"/>
    </location>
</feature>
<gene>
    <name evidence="1" type="primary">rplM</name>
    <name type="ordered locus">Rv3443c</name>
    <name type="ORF">MTCY77.15c</name>
</gene>
<name>RL13_MYCTU</name>
<protein>
    <recommendedName>
        <fullName evidence="1">Large ribosomal subunit protein uL13</fullName>
    </recommendedName>
    <alternativeName>
        <fullName evidence="3">50S ribosomal protein L13</fullName>
    </alternativeName>
</protein>